<accession>Q9VYG2</accession>
<accession>O76490</accession>
<feature type="chain" id="PRO_0000421980" description="Brahma-associated protein of 60 kDa">
    <location>
        <begin position="1"/>
        <end position="515"/>
    </location>
</feature>
<feature type="domain" description="SWIB/MDM2" evidence="1">
    <location>
        <begin position="291"/>
        <end position="368"/>
    </location>
</feature>
<feature type="region of interest" description="Disordered" evidence="2">
    <location>
        <begin position="1"/>
        <end position="124"/>
    </location>
</feature>
<feature type="region of interest" description="DNA-binding" evidence="6">
    <location>
        <begin position="116"/>
        <end position="204"/>
    </location>
</feature>
<feature type="compositionally biased region" description="Pro residues" evidence="2">
    <location>
        <begin position="17"/>
        <end position="34"/>
    </location>
</feature>
<feature type="compositionally biased region" description="Low complexity" evidence="2">
    <location>
        <begin position="49"/>
        <end position="62"/>
    </location>
</feature>
<feature type="compositionally biased region" description="Gly residues" evidence="2">
    <location>
        <begin position="90"/>
        <end position="103"/>
    </location>
</feature>
<feature type="mutagenesis site" description="Loss of DNA-binding. Does not affect function in vivo; when associated with A-166 and A-185." evidence="6">
    <original>K</original>
    <variation>A</variation>
    <location>
        <position position="158"/>
    </location>
</feature>
<feature type="mutagenesis site" description="Loss of DNA-binding. Does not affect function in vivo; when associated with A-158 and A-185." evidence="6">
    <original>K</original>
    <variation>A</variation>
    <location>
        <position position="166"/>
    </location>
</feature>
<feature type="mutagenesis site" description="Loss of DNA-binding. Does not affect function in vivo; when associated with A-158 and A-166." evidence="6">
    <original>R</original>
    <variation>A</variation>
    <location>
        <position position="185"/>
    </location>
</feature>
<feature type="sequence conflict" description="In Ref. 1; AAC28455." evidence="12" ref="1">
    <original>K</original>
    <variation>N</variation>
    <location>
        <position position="435"/>
    </location>
</feature>
<reference evidence="12 13" key="1">
    <citation type="journal article" date="1998" name="Development">
        <title>The Drosophila trithorax group proteins BRM, ASH1 and ASH2 are subunits of distinct protein complexes.</title>
        <authorList>
            <person name="Papoulas O."/>
            <person name="Beek S.J."/>
            <person name="Moseley S.L."/>
            <person name="McCallum C.M."/>
            <person name="Sarte M."/>
            <person name="Shearn A."/>
            <person name="Tamkun J.W."/>
        </authorList>
    </citation>
    <scope>NUCLEOTIDE SEQUENCE [MRNA]</scope>
    <scope>PROTEIN SEQUENCE OF 57-75</scope>
    <scope>IDENTIFICATION IN THE BRAHMA COMPLEX</scope>
    <scope>IDENTIFICATION BY MASS SPECTROMETRY</scope>
</reference>
<reference evidence="14" key="2">
    <citation type="journal article" date="2000" name="Science">
        <title>The genome sequence of Drosophila melanogaster.</title>
        <authorList>
            <person name="Adams M.D."/>
            <person name="Celniker S.E."/>
            <person name="Holt R.A."/>
            <person name="Evans C.A."/>
            <person name="Gocayne J.D."/>
            <person name="Amanatides P.G."/>
            <person name="Scherer S.E."/>
            <person name="Li P.W."/>
            <person name="Hoskins R.A."/>
            <person name="Galle R.F."/>
            <person name="George R.A."/>
            <person name="Lewis S.E."/>
            <person name="Richards S."/>
            <person name="Ashburner M."/>
            <person name="Henderson S.N."/>
            <person name="Sutton G.G."/>
            <person name="Wortman J.R."/>
            <person name="Yandell M.D."/>
            <person name="Zhang Q."/>
            <person name="Chen L.X."/>
            <person name="Brandon R.C."/>
            <person name="Rogers Y.-H.C."/>
            <person name="Blazej R.G."/>
            <person name="Champe M."/>
            <person name="Pfeiffer B.D."/>
            <person name="Wan K.H."/>
            <person name="Doyle C."/>
            <person name="Baxter E.G."/>
            <person name="Helt G."/>
            <person name="Nelson C.R."/>
            <person name="Miklos G.L.G."/>
            <person name="Abril J.F."/>
            <person name="Agbayani A."/>
            <person name="An H.-J."/>
            <person name="Andrews-Pfannkoch C."/>
            <person name="Baldwin D."/>
            <person name="Ballew R.M."/>
            <person name="Basu A."/>
            <person name="Baxendale J."/>
            <person name="Bayraktaroglu L."/>
            <person name="Beasley E.M."/>
            <person name="Beeson K.Y."/>
            <person name="Benos P.V."/>
            <person name="Berman B.P."/>
            <person name="Bhandari D."/>
            <person name="Bolshakov S."/>
            <person name="Borkova D."/>
            <person name="Botchan M.R."/>
            <person name="Bouck J."/>
            <person name="Brokstein P."/>
            <person name="Brottier P."/>
            <person name="Burtis K.C."/>
            <person name="Busam D.A."/>
            <person name="Butler H."/>
            <person name="Cadieu E."/>
            <person name="Center A."/>
            <person name="Chandra I."/>
            <person name="Cherry J.M."/>
            <person name="Cawley S."/>
            <person name="Dahlke C."/>
            <person name="Davenport L.B."/>
            <person name="Davies P."/>
            <person name="de Pablos B."/>
            <person name="Delcher A."/>
            <person name="Deng Z."/>
            <person name="Mays A.D."/>
            <person name="Dew I."/>
            <person name="Dietz S.M."/>
            <person name="Dodson K."/>
            <person name="Doup L.E."/>
            <person name="Downes M."/>
            <person name="Dugan-Rocha S."/>
            <person name="Dunkov B.C."/>
            <person name="Dunn P."/>
            <person name="Durbin K.J."/>
            <person name="Evangelista C.C."/>
            <person name="Ferraz C."/>
            <person name="Ferriera S."/>
            <person name="Fleischmann W."/>
            <person name="Fosler C."/>
            <person name="Gabrielian A.E."/>
            <person name="Garg N.S."/>
            <person name="Gelbart W.M."/>
            <person name="Glasser K."/>
            <person name="Glodek A."/>
            <person name="Gong F."/>
            <person name="Gorrell J.H."/>
            <person name="Gu Z."/>
            <person name="Guan P."/>
            <person name="Harris M."/>
            <person name="Harris N.L."/>
            <person name="Harvey D.A."/>
            <person name="Heiman T.J."/>
            <person name="Hernandez J.R."/>
            <person name="Houck J."/>
            <person name="Hostin D."/>
            <person name="Houston K.A."/>
            <person name="Howland T.J."/>
            <person name="Wei M.-H."/>
            <person name="Ibegwam C."/>
            <person name="Jalali M."/>
            <person name="Kalush F."/>
            <person name="Karpen G.H."/>
            <person name="Ke Z."/>
            <person name="Kennison J.A."/>
            <person name="Ketchum K.A."/>
            <person name="Kimmel B.E."/>
            <person name="Kodira C.D."/>
            <person name="Kraft C.L."/>
            <person name="Kravitz S."/>
            <person name="Kulp D."/>
            <person name="Lai Z."/>
            <person name="Lasko P."/>
            <person name="Lei Y."/>
            <person name="Levitsky A.A."/>
            <person name="Li J.H."/>
            <person name="Li Z."/>
            <person name="Liang Y."/>
            <person name="Lin X."/>
            <person name="Liu X."/>
            <person name="Mattei B."/>
            <person name="McIntosh T.C."/>
            <person name="McLeod M.P."/>
            <person name="McPherson D."/>
            <person name="Merkulov G."/>
            <person name="Milshina N.V."/>
            <person name="Mobarry C."/>
            <person name="Morris J."/>
            <person name="Moshrefi A."/>
            <person name="Mount S.M."/>
            <person name="Moy M."/>
            <person name="Murphy B."/>
            <person name="Murphy L."/>
            <person name="Muzny D.M."/>
            <person name="Nelson D.L."/>
            <person name="Nelson D.R."/>
            <person name="Nelson K.A."/>
            <person name="Nixon K."/>
            <person name="Nusskern D.R."/>
            <person name="Pacleb J.M."/>
            <person name="Palazzolo M."/>
            <person name="Pittman G.S."/>
            <person name="Pan S."/>
            <person name="Pollard J."/>
            <person name="Puri V."/>
            <person name="Reese M.G."/>
            <person name="Reinert K."/>
            <person name="Remington K."/>
            <person name="Saunders R.D.C."/>
            <person name="Scheeler F."/>
            <person name="Shen H."/>
            <person name="Shue B.C."/>
            <person name="Siden-Kiamos I."/>
            <person name="Simpson M."/>
            <person name="Skupski M.P."/>
            <person name="Smith T.J."/>
            <person name="Spier E."/>
            <person name="Spradling A.C."/>
            <person name="Stapleton M."/>
            <person name="Strong R."/>
            <person name="Sun E."/>
            <person name="Svirskas R."/>
            <person name="Tector C."/>
            <person name="Turner R."/>
            <person name="Venter E."/>
            <person name="Wang A.H."/>
            <person name="Wang X."/>
            <person name="Wang Z.-Y."/>
            <person name="Wassarman D.A."/>
            <person name="Weinstock G.M."/>
            <person name="Weissenbach J."/>
            <person name="Williams S.M."/>
            <person name="Woodage T."/>
            <person name="Worley K.C."/>
            <person name="Wu D."/>
            <person name="Yang S."/>
            <person name="Yao Q.A."/>
            <person name="Ye J."/>
            <person name="Yeh R.-F."/>
            <person name="Zaveri J.S."/>
            <person name="Zhan M."/>
            <person name="Zhang G."/>
            <person name="Zhao Q."/>
            <person name="Zheng L."/>
            <person name="Zheng X.H."/>
            <person name="Zhong F.N."/>
            <person name="Zhong W."/>
            <person name="Zhou X."/>
            <person name="Zhu S.C."/>
            <person name="Zhu X."/>
            <person name="Smith H.O."/>
            <person name="Gibbs R.A."/>
            <person name="Myers E.W."/>
            <person name="Rubin G.M."/>
            <person name="Venter J.C."/>
        </authorList>
    </citation>
    <scope>NUCLEOTIDE SEQUENCE [LARGE SCALE GENOMIC DNA]</scope>
    <source>
        <strain>Berkeley</strain>
    </source>
</reference>
<reference evidence="14" key="3">
    <citation type="journal article" date="2002" name="Genome Biol.">
        <title>Annotation of the Drosophila melanogaster euchromatic genome: a systematic review.</title>
        <authorList>
            <person name="Misra S."/>
            <person name="Crosby M.A."/>
            <person name="Mungall C.J."/>
            <person name="Matthews B.B."/>
            <person name="Campbell K.S."/>
            <person name="Hradecky P."/>
            <person name="Huang Y."/>
            <person name="Kaminker J.S."/>
            <person name="Millburn G.H."/>
            <person name="Prochnik S.E."/>
            <person name="Smith C.D."/>
            <person name="Tupy J.L."/>
            <person name="Whitfield E.J."/>
            <person name="Bayraktaroglu L."/>
            <person name="Berman B.P."/>
            <person name="Bettencourt B.R."/>
            <person name="Celniker S.E."/>
            <person name="de Grey A.D.N.J."/>
            <person name="Drysdale R.A."/>
            <person name="Harris N.L."/>
            <person name="Richter J."/>
            <person name="Russo S."/>
            <person name="Schroeder A.J."/>
            <person name="Shu S.Q."/>
            <person name="Stapleton M."/>
            <person name="Yamada C."/>
            <person name="Ashburner M."/>
            <person name="Gelbart W.M."/>
            <person name="Rubin G.M."/>
            <person name="Lewis S.E."/>
        </authorList>
    </citation>
    <scope>GENOME REANNOTATION</scope>
    <source>
        <strain>Berkeley</strain>
    </source>
</reference>
<reference evidence="15" key="4">
    <citation type="journal article" date="2002" name="Genome Biol.">
        <title>A Drosophila full-length cDNA resource.</title>
        <authorList>
            <person name="Stapleton M."/>
            <person name="Carlson J.W."/>
            <person name="Brokstein P."/>
            <person name="Yu C."/>
            <person name="Champe M."/>
            <person name="George R.A."/>
            <person name="Guarin H."/>
            <person name="Kronmiller B."/>
            <person name="Pacleb J.M."/>
            <person name="Park S."/>
            <person name="Wan K.H."/>
            <person name="Rubin G.M."/>
            <person name="Celniker S.E."/>
        </authorList>
    </citation>
    <scope>NUCLEOTIDE SEQUENCE [LARGE SCALE MRNA]</scope>
    <source>
        <strain evidence="15">Berkeley</strain>
        <tissue evidence="4">Embryo</tissue>
    </source>
</reference>
<reference evidence="12" key="5">
    <citation type="journal article" date="2000" name="Genes Dev.">
        <title>The Drosophila brahma complex is an essential coactivator for the trithorax group protein zeste.</title>
        <authorList>
            <person name="Kal A.J."/>
            <person name="Mahmoudi T."/>
            <person name="Zak N.B."/>
            <person name="Verrijzer C.P."/>
        </authorList>
    </citation>
    <scope>INTERACTION WITH MOR</scope>
</reference>
<reference evidence="12" key="6">
    <citation type="journal article" date="2004" name="Mol. Cell. Biol.">
        <title>Differential targeting of two distinct SWI/SNF-related Drosophila chromatin-remodeling complexes.</title>
        <authorList>
            <person name="Mohrmann L."/>
            <person name="Langenberg K."/>
            <person name="Krijgsveld J."/>
            <person name="Kal A.J."/>
            <person name="Heck A.J."/>
            <person name="Verrijzer C.P."/>
        </authorList>
    </citation>
    <scope>IDENTIFICATION IN THE BRAHMA COMPLEX</scope>
    <scope>IDENTIFICATION BY MASS SPECTROMETRY</scope>
</reference>
<reference evidence="12" key="7">
    <citation type="journal article" date="2005" name="J. Mol. Biol.">
        <title>Drosophila BAP60 is an essential component of the Brahma complex, required for gene activation and repression.</title>
        <authorList>
            <person name="Moller A."/>
            <person name="Avila F.W."/>
            <person name="Erickson J.W."/>
            <person name="Jackle H."/>
        </authorList>
    </citation>
    <scope>FUNCTION</scope>
    <scope>INTERACTION WITH SISA AND SC</scope>
    <scope>DEVELOPMENTAL STAGE</scope>
    <scope>DNA-BINDING</scope>
    <scope>MUTAGENESIS OF LYS-158; LYS-166 AND ARG-185</scope>
</reference>
<reference evidence="12" key="8">
    <citation type="journal article" date="2010" name="Proc. Natl. Acad. Sci. U.S.A.">
        <title>A genome-scale protein interaction profile of Drosophila p53 uncovers additional nodes of the human p53 network.</title>
        <authorList>
            <person name="Lunardi A."/>
            <person name="Di Minin G."/>
            <person name="Provero P."/>
            <person name="Dal Ferro M."/>
            <person name="Carotti M."/>
            <person name="Del Sal G."/>
            <person name="Collavin L."/>
        </authorList>
    </citation>
    <scope>INTERACTION WITH P53</scope>
</reference>
<reference key="9">
    <citation type="journal article" date="2014" name="Elife">
        <title>The Brm-HDAC3-Erm repressor complex suppresses dedifferentiation in Drosophila type II neuroblast lineages.</title>
        <authorList>
            <person name="Koe C.T."/>
            <person name="Li S."/>
            <person name="Rossi F."/>
            <person name="Wong J.J."/>
            <person name="Wang Y."/>
            <person name="Zhang Z."/>
            <person name="Chen K."/>
            <person name="Aw S.S."/>
            <person name="Richardson H.E."/>
            <person name="Robson P."/>
            <person name="Sung W.K."/>
            <person name="Yu F."/>
            <person name="Gonzalez C."/>
            <person name="Wang H."/>
        </authorList>
    </citation>
    <scope>FUNCTION</scope>
    <scope>INTERACTION WITH ERM</scope>
    <scope>DISRUPTION PHENOTYPE</scope>
</reference>
<reference key="10">
    <citation type="journal article" date="2014" name="EMBO J.">
        <title>Akirin specifies NF-kappaB selectivity of Drosophila innate immune response via chromatin remodeling.</title>
        <authorList>
            <person name="Bonnay F."/>
            <person name="Nguyen X.H."/>
            <person name="Cohen-Berros E."/>
            <person name="Troxler L."/>
            <person name="Batsche E."/>
            <person name="Camonis J."/>
            <person name="Takeuchi O."/>
            <person name="Reichhart J.M."/>
            <person name="Matt N."/>
        </authorList>
    </citation>
    <scope>INTERACTION WITH AKIRIN</scope>
</reference>
<evidence type="ECO:0000255" key="1">
    <source>
        <dbReference type="PROSITE-ProRule" id="PRU01273"/>
    </source>
</evidence>
<evidence type="ECO:0000256" key="2">
    <source>
        <dbReference type="SAM" id="MobiDB-lite"/>
    </source>
</evidence>
<evidence type="ECO:0000269" key="3">
    <source>
    </source>
</evidence>
<evidence type="ECO:0000269" key="4">
    <source>
    </source>
</evidence>
<evidence type="ECO:0000269" key="5">
    <source>
    </source>
</evidence>
<evidence type="ECO:0000269" key="6">
    <source>
    </source>
</evidence>
<evidence type="ECO:0000269" key="7">
    <source>
    </source>
</evidence>
<evidence type="ECO:0000269" key="8">
    <source>
    </source>
</evidence>
<evidence type="ECO:0000269" key="9">
    <source>
    </source>
</evidence>
<evidence type="ECO:0000269" key="10">
    <source>
    </source>
</evidence>
<evidence type="ECO:0000303" key="11">
    <source>
    </source>
</evidence>
<evidence type="ECO:0000305" key="12"/>
<evidence type="ECO:0000312" key="13">
    <source>
        <dbReference type="EMBL" id="AAC28455.1"/>
    </source>
</evidence>
<evidence type="ECO:0000312" key="14">
    <source>
        <dbReference type="EMBL" id="AAF48235.1"/>
    </source>
</evidence>
<evidence type="ECO:0000312" key="15">
    <source>
        <dbReference type="EMBL" id="AAL39528.1"/>
    </source>
</evidence>
<proteinExistence type="evidence at protein level"/>
<organism>
    <name type="scientific">Drosophila melanogaster</name>
    <name type="common">Fruit fly</name>
    <dbReference type="NCBI Taxonomy" id="7227"/>
    <lineage>
        <taxon>Eukaryota</taxon>
        <taxon>Metazoa</taxon>
        <taxon>Ecdysozoa</taxon>
        <taxon>Arthropoda</taxon>
        <taxon>Hexapoda</taxon>
        <taxon>Insecta</taxon>
        <taxon>Pterygota</taxon>
        <taxon>Neoptera</taxon>
        <taxon>Endopterygota</taxon>
        <taxon>Diptera</taxon>
        <taxon>Brachycera</taxon>
        <taxon>Muscomorpha</taxon>
        <taxon>Ephydroidea</taxon>
        <taxon>Drosophilidae</taxon>
        <taxon>Drosophila</taxon>
        <taxon>Sophophora</taxon>
    </lineage>
</organism>
<gene>
    <name type="primary">Bap60</name>
    <name type="ORF">CG4303</name>
</gene>
<comment type="function">
    <text evidence="6 8">Involved in the recruitment and site-specific anchoring of the Brahma complex at specific promoter sites (PubMed:16083904, PubMed:24618901). The Brahma complex is a multiprotein complex which is the equivalent of the yeast SWI/SNF complex and acts by remodeling the chromatin by catalyzing an ATP-dependent alteration in the structure of nucleosomal DNA (PubMed:16083904, PubMed:24618901). This complex can both serve as a transcriptional coactivator or corepressor, depending on the context (PubMed:16083904). Participates in X-chromosomal dosage compensation (PubMed:16083904). Participates in neurogenesis (PubMed:16083904, PubMed:24618901).</text>
</comment>
<comment type="subunit">
    <text evidence="3 5 6 7 8 9 10">There are 2 distinct Brahma complexes in the fruit fly, the Brahma-associated proteins (BAP) and Polybromo-containing BAP (PBAP) complexes, which are composed of common subunits Brm, Mor, Snr1/Bap45, Bap111/Dalo, Bap55, Bap60 and Act42A/Bap47, and additional signature subunits osa in the BAP complex and Polybromo and Bap170 in the PBAP complex (PubMed:15060132). Interacts with sisA and sc (PubMed:16083904). Interacts with mor (PubMed:10809665). Interacts with p53 (PubMed:20308539). Interacts with erm (via N-terminal) (PubMed:24618901). Interacts with akirin; interaction is immune stimulation-dependent; activates selected Rel target gene promoters (PubMed:25180232).</text>
</comment>
<comment type="interaction">
    <interactant intactId="EBI-75169">
        <id>Q9VYG2</id>
    </interactant>
    <interactant intactId="EBI-96644">
        <id>Q9VS59</id>
        <label>akirin</label>
    </interactant>
    <organismsDiffer>false</organismsDiffer>
    <experiments>4</experiments>
</comment>
<comment type="interaction">
    <interactant intactId="EBI-75169">
        <id>Q9VYG2</id>
    </interactant>
    <interactant intactId="EBI-74922">
        <id>O96757</id>
        <label>stumps</label>
    </interactant>
    <organismsDiffer>false</organismsDiffer>
    <experiments>3</experiments>
</comment>
<comment type="developmental stage">
    <text evidence="6">Expressed both maternally and zygotically. Maternal expression is uniform at the blastoderm stage. Zygotic expression becomes predominant at the extended band stage. After germ band retraction, expression is restricted to the ventral nerve cord and the brain.</text>
</comment>
<comment type="disruption phenotype">
    <text evidence="8">RNAi-mediated knockdown results in ectopic expression of type II neuroblast lineages in larval brains.</text>
</comment>
<name>BAP60_DROME</name>
<sequence length="515" mass="58170">MSQRFAPGQAPVQSRYQPPPPAPGMRPYPPPGASFPPRGFPLHPNTTQPVPGTANVAGVPGVPGVPGVPGPSLLQRAAQQPGFQSSLRGTGAGGGGVGSGGGSKRSNESRSLGGGGSKSDFATAKKKKKLAEKILPQKVRDLVPESQAYMDLLTFERKLDATIMRKRLDIQEALKRPMKQKRKLRIFISNTFYPSKEPTNDGEEGAVASWELRVEGRLLEDGKGDPNTKIKRKFSSFFKSLVIELDKELYGPDNHLVEWHRTHTTQETDGFQVKRPGDRNVRCTILLLLDYQPLQFKLDPRLARLLGVHTQTRPVIISALWQYIKTHKLQDAHEREYINCDKYLEQIFSCQRMKFAEIPQRLNPLLHPPDPIVINHFIESGAENKQTACYDIDVEVDDTLKNQMNSFLMSTASQQEIQGLDTKIHETVDTINQMKTNREFFLSFAKDPQMFIHRWIISETRDLKLMTDVAGNPEEERRAEFYYQPWTHEAVSRYFFTKVNQKRAELEQALGIRNG</sequence>
<protein>
    <recommendedName>
        <fullName>Brahma-associated protein of 60 kDa</fullName>
    </recommendedName>
    <alternativeName>
        <fullName evidence="11">BRM-associated protein 60</fullName>
    </alternativeName>
</protein>
<dbReference type="EMBL" id="AF071503">
    <property type="protein sequence ID" value="AAC28455.1"/>
    <property type="molecule type" value="mRNA"/>
</dbReference>
<dbReference type="EMBL" id="AE014298">
    <property type="protein sequence ID" value="AAF48235.1"/>
    <property type="molecule type" value="Genomic_DNA"/>
</dbReference>
<dbReference type="EMBL" id="AY069383">
    <property type="protein sequence ID" value="AAL39528.1"/>
    <property type="molecule type" value="mRNA"/>
</dbReference>
<dbReference type="RefSeq" id="NP_511143.2">
    <property type="nucleotide sequence ID" value="NM_078588.4"/>
</dbReference>
<dbReference type="SMR" id="Q9VYG2"/>
<dbReference type="BioGRID" id="58653">
    <property type="interactions" value="142"/>
</dbReference>
<dbReference type="ComplexPortal" id="CPX-2346">
    <property type="entry name" value="Non-canonical BRAHMA-associated SWI/SNF ATP-dependent chromatin remodeling complex"/>
</dbReference>
<dbReference type="ComplexPortal" id="CPX-2383">
    <property type="entry name" value="Polybromo-containing BRAHMA associated proteins complex"/>
</dbReference>
<dbReference type="ComplexPortal" id="CPX-2746">
    <property type="entry name" value="Brahma SWI/SNF ATP-dependent chromatin remodeling complex"/>
</dbReference>
<dbReference type="FunCoup" id="Q9VYG2">
    <property type="interactions" value="1862"/>
</dbReference>
<dbReference type="IntAct" id="Q9VYG2">
    <property type="interactions" value="69"/>
</dbReference>
<dbReference type="MINT" id="Q9VYG2"/>
<dbReference type="STRING" id="7227.FBpp0073572"/>
<dbReference type="PaxDb" id="7227-FBpp0073572"/>
<dbReference type="EnsemblMetazoa" id="FBtr0073741">
    <property type="protein sequence ID" value="FBpp0073572"/>
    <property type="gene ID" value="FBgn0025463"/>
</dbReference>
<dbReference type="GeneID" id="32268"/>
<dbReference type="KEGG" id="dme:Dmel_CG4303"/>
<dbReference type="UCSC" id="CG4303-RA">
    <property type="organism name" value="d. melanogaster"/>
</dbReference>
<dbReference type="AGR" id="FB:FBgn0025463"/>
<dbReference type="CTD" id="32268"/>
<dbReference type="FlyBase" id="FBgn0025463">
    <property type="gene designation" value="Bap60"/>
</dbReference>
<dbReference type="VEuPathDB" id="VectorBase:FBgn0025463"/>
<dbReference type="eggNOG" id="KOG2570">
    <property type="taxonomic scope" value="Eukaryota"/>
</dbReference>
<dbReference type="GeneTree" id="ENSGT00940000156629"/>
<dbReference type="HOGENOM" id="CLU_023529_0_2_1"/>
<dbReference type="InParanoid" id="Q9VYG2"/>
<dbReference type="OMA" id="NFRCNEP"/>
<dbReference type="OrthoDB" id="10263741at2759"/>
<dbReference type="PhylomeDB" id="Q9VYG2"/>
<dbReference type="Reactome" id="R-DME-3214858">
    <property type="pathway name" value="RMTs methylate histone arginines"/>
</dbReference>
<dbReference type="Reactome" id="R-DME-400206">
    <property type="pathway name" value="Regulation of lipid metabolism by PPARalpha"/>
</dbReference>
<dbReference type="Reactome" id="R-DME-8939243">
    <property type="pathway name" value="RUNX1 interacts with co-factors whose precise effect on RUNX1 targets is not known"/>
</dbReference>
<dbReference type="Reactome" id="R-DME-9707564">
    <property type="pathway name" value="Cytoprotection by HMOX1"/>
</dbReference>
<dbReference type="SignaLink" id="Q9VYG2"/>
<dbReference type="BioGRID-ORCS" id="32268">
    <property type="hits" value="0 hits in 3 CRISPR screens"/>
</dbReference>
<dbReference type="ChiTaRS" id="Bap60">
    <property type="organism name" value="fly"/>
</dbReference>
<dbReference type="GenomeRNAi" id="32268"/>
<dbReference type="PRO" id="PR:Q9VYG2"/>
<dbReference type="Proteomes" id="UP000000803">
    <property type="component" value="Chromosome X"/>
</dbReference>
<dbReference type="Bgee" id="FBgn0025463">
    <property type="expression patterns" value="Expressed in secondary oocyte and 141 other cell types or tissues"/>
</dbReference>
<dbReference type="GO" id="GO:0035060">
    <property type="term" value="C:brahma complex"/>
    <property type="evidence" value="ECO:0000314"/>
    <property type="project" value="FlyBase"/>
</dbReference>
<dbReference type="GO" id="GO:0000791">
    <property type="term" value="C:euchromatin"/>
    <property type="evidence" value="ECO:0000314"/>
    <property type="project" value="FlyBase"/>
</dbReference>
<dbReference type="GO" id="GO:0005634">
    <property type="term" value="C:nucleus"/>
    <property type="evidence" value="ECO:0000314"/>
    <property type="project" value="FlyBase"/>
</dbReference>
<dbReference type="GO" id="GO:0016514">
    <property type="term" value="C:SWI/SNF complex"/>
    <property type="evidence" value="ECO:0000318"/>
    <property type="project" value="GO_Central"/>
</dbReference>
<dbReference type="GO" id="GO:0003677">
    <property type="term" value="F:DNA binding"/>
    <property type="evidence" value="ECO:0000314"/>
    <property type="project" value="FlyBase"/>
</dbReference>
<dbReference type="GO" id="GO:0017022">
    <property type="term" value="F:myosin binding"/>
    <property type="evidence" value="ECO:0000353"/>
    <property type="project" value="FlyBase"/>
</dbReference>
<dbReference type="GO" id="GO:0019904">
    <property type="term" value="F:protein domain specific binding"/>
    <property type="evidence" value="ECO:0000353"/>
    <property type="project" value="UniProtKB"/>
</dbReference>
<dbReference type="GO" id="GO:0061629">
    <property type="term" value="F:RNA polymerase II-specific DNA-binding transcription factor binding"/>
    <property type="evidence" value="ECO:0000353"/>
    <property type="project" value="FlyBase"/>
</dbReference>
<dbReference type="GO" id="GO:0003712">
    <property type="term" value="F:transcription coregulator activity"/>
    <property type="evidence" value="ECO:0000318"/>
    <property type="project" value="GO_Central"/>
</dbReference>
<dbReference type="GO" id="GO:0007406">
    <property type="term" value="P:negative regulation of neuroblast proliferation"/>
    <property type="evidence" value="ECO:0000315"/>
    <property type="project" value="UniProtKB"/>
</dbReference>
<dbReference type="GO" id="GO:0045893">
    <property type="term" value="P:positive regulation of DNA-templated transcription"/>
    <property type="evidence" value="ECO:0000314"/>
    <property type="project" value="FlyBase"/>
</dbReference>
<dbReference type="GO" id="GO:0010628">
    <property type="term" value="P:positive regulation of gene expression"/>
    <property type="evidence" value="ECO:0000316"/>
    <property type="project" value="FlyBase"/>
</dbReference>
<dbReference type="GO" id="GO:0031453">
    <property type="term" value="P:positive regulation of heterochromatin formation"/>
    <property type="evidence" value="ECO:0000315"/>
    <property type="project" value="FlyBase"/>
</dbReference>
<dbReference type="GO" id="GO:0006357">
    <property type="term" value="P:regulation of transcription by RNA polymerase II"/>
    <property type="evidence" value="ECO:0000315"/>
    <property type="project" value="FlyBase"/>
</dbReference>
<dbReference type="CDD" id="cd17674">
    <property type="entry name" value="SWIB_BAF60A"/>
    <property type="match status" value="1"/>
</dbReference>
<dbReference type="FunFam" id="1.10.245.10:FF:000001">
    <property type="entry name" value="SWI/SNF-related matrix-associated regulator of chromatin subfamily D member 3 isoform 1"/>
    <property type="match status" value="1"/>
</dbReference>
<dbReference type="Gene3D" id="1.10.245.10">
    <property type="entry name" value="SWIB/MDM2 domain"/>
    <property type="match status" value="1"/>
</dbReference>
<dbReference type="InterPro" id="IPR038041">
    <property type="entry name" value="SMARCD1_SWIB_dom"/>
</dbReference>
<dbReference type="InterPro" id="IPR019835">
    <property type="entry name" value="SWIB_domain"/>
</dbReference>
<dbReference type="InterPro" id="IPR036885">
    <property type="entry name" value="SWIB_MDM2_dom_sf"/>
</dbReference>
<dbReference type="InterPro" id="IPR003121">
    <property type="entry name" value="SWIB_MDM2_domain"/>
</dbReference>
<dbReference type="PANTHER" id="PTHR13844">
    <property type="entry name" value="SWI/SNF-RELATED MATRIX-ASSOCIATED ACTIN-DEPENDENT REGULATOR OF CHROMATIN SUBFAMILY D"/>
    <property type="match status" value="1"/>
</dbReference>
<dbReference type="Pfam" id="PF02201">
    <property type="entry name" value="SWIB"/>
    <property type="match status" value="1"/>
</dbReference>
<dbReference type="SMART" id="SM00151">
    <property type="entry name" value="SWIB"/>
    <property type="match status" value="1"/>
</dbReference>
<dbReference type="SUPFAM" id="SSF47592">
    <property type="entry name" value="SWIB/MDM2 domain"/>
    <property type="match status" value="1"/>
</dbReference>
<dbReference type="PROSITE" id="PS51925">
    <property type="entry name" value="SWIB_MDM2"/>
    <property type="match status" value="1"/>
</dbReference>
<keyword id="KW-0217">Developmental protein</keyword>
<keyword id="KW-0903">Direct protein sequencing</keyword>
<keyword id="KW-0238">DNA-binding</keyword>
<keyword id="KW-0597">Phosphoprotein</keyword>
<keyword id="KW-1185">Reference proteome</keyword>
<keyword id="KW-0804">Transcription</keyword>
<keyword id="KW-0805">Transcription regulation</keyword>